<name>COLD1_ORYSJ</name>
<organism>
    <name type="scientific">Oryza sativa subsp. japonica</name>
    <name type="common">Rice</name>
    <dbReference type="NCBI Taxonomy" id="39947"/>
    <lineage>
        <taxon>Eukaryota</taxon>
        <taxon>Viridiplantae</taxon>
        <taxon>Streptophyta</taxon>
        <taxon>Embryophyta</taxon>
        <taxon>Tracheophyta</taxon>
        <taxon>Spermatophyta</taxon>
        <taxon>Magnoliopsida</taxon>
        <taxon>Liliopsida</taxon>
        <taxon>Poales</taxon>
        <taxon>Poaceae</taxon>
        <taxon>BOP clade</taxon>
        <taxon>Oryzoideae</taxon>
        <taxon>Oryzeae</taxon>
        <taxon>Oryzinae</taxon>
        <taxon>Oryza</taxon>
        <taxon>Oryza sativa</taxon>
    </lineage>
</organism>
<comment type="function">
    <text evidence="2">Involved in chilling tolerance. Interacts with the G-protein alpha subunit GPA1 to activate the calcium channel for sensing low temperature and to accelerate G-protein GTPase activity.</text>
</comment>
<comment type="subunit">
    <text evidence="2">Interacts with GPA1/RGA1.</text>
</comment>
<comment type="subcellular location">
    <subcellularLocation>
        <location evidence="2">Cell membrane</location>
        <topology evidence="1">Multi-pass membrane protein</topology>
    </subcellularLocation>
    <subcellularLocation>
        <location evidence="2">Endoplasmic reticulum membrane</location>
        <topology evidence="1">Multi-pass membrane protein</topology>
    </subcellularLocation>
</comment>
<comment type="disruption phenotype">
    <text evidence="2">No visible phenotype under normal growth conditions, but mutant plants are sensitive to cold.</text>
</comment>
<comment type="miscellaneous">
    <text evidence="2">In cold sensitive indica cultivars (AC A2XX57) Lys-187 is replaced by Met-187 or Thr-187. These polymorphisms are associated with divergence in chilling tolerance of rice cultivars. COLD1 confers adaptation of japonica rice to chilling and originated from the Chinese wild populations of Oryza rufipogon.</text>
</comment>
<comment type="similarity">
    <text evidence="4">Belongs to the Golgi pH regulator (TC 1.A.38) family.</text>
</comment>
<comment type="sequence caution" evidence="4">
    <conflict type="erroneous gene model prediction">
        <sequence resource="EMBL-CDS" id="BAF15676"/>
    </conflict>
</comment>
<feature type="initiator methionine" description="Removed" evidence="5">
    <location>
        <position position="1"/>
    </location>
</feature>
<feature type="chain" id="PRO_0000432809" description="GPCR-type G protein COLD1">
    <location>
        <begin position="2"/>
        <end position="468"/>
    </location>
</feature>
<feature type="transmembrane region" description="Helical; Name=1" evidence="1">
    <location>
        <begin position="7"/>
        <end position="27"/>
    </location>
</feature>
<feature type="transmembrane region" description="Helical; Name=2" evidence="1">
    <location>
        <begin position="45"/>
        <end position="65"/>
    </location>
</feature>
<feature type="transmembrane region" description="Helical; Name=3" evidence="1">
    <location>
        <begin position="82"/>
        <end position="102"/>
    </location>
</feature>
<feature type="transmembrane region" description="Helical; Name=4" evidence="1">
    <location>
        <begin position="112"/>
        <end position="132"/>
    </location>
</feature>
<feature type="transmembrane region" description="Helical; Name=5" evidence="1">
    <location>
        <begin position="153"/>
        <end position="173"/>
    </location>
</feature>
<feature type="transmembrane region" description="Helical; Name=6" evidence="1">
    <location>
        <begin position="297"/>
        <end position="319"/>
    </location>
</feature>
<feature type="transmembrane region" description="Helical; Name=7" evidence="1">
    <location>
        <begin position="345"/>
        <end position="365"/>
    </location>
</feature>
<feature type="transmembrane region" description="Helical; Name=8" evidence="1">
    <location>
        <begin position="389"/>
        <end position="409"/>
    </location>
</feature>
<feature type="transmembrane region" description="Helical; Name=9" evidence="1">
    <location>
        <begin position="437"/>
        <end position="457"/>
    </location>
</feature>
<feature type="coiled-coil region" evidence="1">
    <location>
        <begin position="243"/>
        <end position="279"/>
    </location>
</feature>
<feature type="lipid moiety-binding region" description="N-myristoyl glycine" evidence="5">
    <location>
        <position position="2"/>
    </location>
</feature>
<feature type="mutagenesis site" description="No effect on cellular localization." evidence="2">
    <original>G</original>
    <variation>A</variation>
    <location>
        <position position="2"/>
    </location>
</feature>
<feature type="sequence conflict" description="In Ref. 6; AK318606 and 5; EAZ31870." evidence="4" ref="6 5">
    <original>G</original>
    <variation>E</variation>
    <location>
        <position position="9"/>
    </location>
</feature>
<proteinExistence type="evidence at protein level"/>
<evidence type="ECO:0000255" key="1"/>
<evidence type="ECO:0000269" key="2">
    <source>
    </source>
</evidence>
<evidence type="ECO:0000303" key="3">
    <source>
    </source>
</evidence>
<evidence type="ECO:0000305" key="4"/>
<evidence type="ECO:0000305" key="5">
    <source>
    </source>
</evidence>
<evidence type="ECO:0000312" key="6">
    <source>
        <dbReference type="EMBL" id="BAF15676.2"/>
    </source>
</evidence>
<evidence type="ECO:0000312" key="7">
    <source>
        <dbReference type="EMBL" id="CAD41818.2"/>
    </source>
</evidence>
<evidence type="ECO:0000312" key="8">
    <source>
        <dbReference type="EMBL" id="EAZ31870.1"/>
    </source>
</evidence>
<keyword id="KW-1003">Cell membrane</keyword>
<keyword id="KW-0175">Coiled coil</keyword>
<keyword id="KW-0256">Endoplasmic reticulum</keyword>
<keyword id="KW-0449">Lipoprotein</keyword>
<keyword id="KW-0472">Membrane</keyword>
<keyword id="KW-0519">Myristate</keyword>
<keyword id="KW-1185">Reference proteome</keyword>
<keyword id="KW-0346">Stress response</keyword>
<keyword id="KW-0812">Transmembrane</keyword>
<keyword id="KW-1133">Transmembrane helix</keyword>
<protein>
    <recommendedName>
        <fullName evidence="4">GPCR-type G protein COLD1</fullName>
    </recommendedName>
    <alternativeName>
        <fullName evidence="3">Protein CHILLING TOLERANCE DIVERGENCE 1</fullName>
    </alternativeName>
</protein>
<gene>
    <name evidence="3" type="primary">COLD1</name>
    <name evidence="6" type="ordered locus">Os04g0600800</name>
    <name evidence="4" type="ordered locus">LOC_Os04g51180</name>
    <name evidence="8" type="ORF">OsJ_16035</name>
    <name evidence="7" type="ORF">OSJNBa0083N12.15</name>
</gene>
<accession>Q7X7S8</accession>
<accession>A0A0P0WEQ4</accession>
<accession>A3AX31</accession>
<accession>Q0JAG1</accession>
<sequence>MGWGAVVYGGGVVGASLVGLGWAGLWFLNRRLYKEYEERRALVQILFGLVFAFSCNLFQLVLFEILPVLSKHARFLNWHLDLFCLILLLVFVLPYYHCYLLLRNSGVRRERALLVAALFLLVFLYGFWRMGIHFPMPSPEKGFFTMPQLVSRIGVIGVSVMAVLSGFGAVNLPYSYLSLFIREIDEKDIKTLERQLMQSMETCIAKKKKIVLSKMEMERIQGSEEKLKARSFLKRIVGTVVRSVQEDQTEQDIKSLDAEVQALEELSKQLFLEIYELRQAKIAAAFSRTWRGHAQNLLGYALSVYCVYKMLKSLQSVVFKEAGSVDPVTMTITIFLRHFDIGIDVTLLSQYISLIFIGMLVVISVRGFLANVMKFFFAVSRVGSGSTTNVVLFLSEIMGMYFISSILLIRKSLANEYRVIITDVLGGDIQFDFYHRWFDAIFVASAFLSLLLISAQYTSRQTDKHPID</sequence>
<dbReference type="EMBL" id="AL606683">
    <property type="protein sequence ID" value="CAD41818.2"/>
    <property type="molecule type" value="Genomic_DNA"/>
</dbReference>
<dbReference type="EMBL" id="AP008210">
    <property type="protein sequence ID" value="BAF15676.2"/>
    <property type="status" value="ALT_SEQ"/>
    <property type="molecule type" value="Genomic_DNA"/>
</dbReference>
<dbReference type="EMBL" id="AP014960">
    <property type="protein sequence ID" value="BAS90836.1"/>
    <property type="molecule type" value="Genomic_DNA"/>
</dbReference>
<dbReference type="EMBL" id="CM000141">
    <property type="protein sequence ID" value="EAZ31870.1"/>
    <property type="molecule type" value="Genomic_DNA"/>
</dbReference>
<dbReference type="EMBL" id="AK318606">
    <property type="status" value="NOT_ANNOTATED_CDS"/>
    <property type="molecule type" value="mRNA"/>
</dbReference>
<dbReference type="RefSeq" id="XP_015633398.1">
    <property type="nucleotide sequence ID" value="XM_015777912.1"/>
</dbReference>
<dbReference type="FunCoup" id="Q7X7S8">
    <property type="interactions" value="1822"/>
</dbReference>
<dbReference type="STRING" id="39947.Q7X7S8"/>
<dbReference type="iPTMnet" id="Q7X7S8"/>
<dbReference type="PaxDb" id="39947-Q7X7S8"/>
<dbReference type="EnsemblPlants" id="Os04t0600800-01">
    <property type="protein sequence ID" value="Os04t0600800-01"/>
    <property type="gene ID" value="Os04g0600800"/>
</dbReference>
<dbReference type="Gramene" id="Os04t0600800-01">
    <property type="protein sequence ID" value="Os04t0600800-01"/>
    <property type="gene ID" value="Os04g0600800"/>
</dbReference>
<dbReference type="KEGG" id="dosa:Os04g0600800"/>
<dbReference type="eggNOG" id="KOG2417">
    <property type="taxonomic scope" value="Eukaryota"/>
</dbReference>
<dbReference type="HOGENOM" id="CLU_030540_1_0_1"/>
<dbReference type="InParanoid" id="Q7X7S8"/>
<dbReference type="OMA" id="FSVYCVY"/>
<dbReference type="OrthoDB" id="264392at2759"/>
<dbReference type="Proteomes" id="UP000000763">
    <property type="component" value="Chromosome 4"/>
</dbReference>
<dbReference type="Proteomes" id="UP000007752">
    <property type="component" value="Chromosome 4"/>
</dbReference>
<dbReference type="Proteomes" id="UP000059680">
    <property type="component" value="Chromosome 4"/>
</dbReference>
<dbReference type="GO" id="GO:0005789">
    <property type="term" value="C:endoplasmic reticulum membrane"/>
    <property type="evidence" value="ECO:0000314"/>
    <property type="project" value="UniProtKB"/>
</dbReference>
<dbReference type="GO" id="GO:0005886">
    <property type="term" value="C:plasma membrane"/>
    <property type="evidence" value="ECO:0000314"/>
    <property type="project" value="UniProtKB"/>
</dbReference>
<dbReference type="GO" id="GO:0010427">
    <property type="term" value="F:abscisic acid binding"/>
    <property type="evidence" value="ECO:0000318"/>
    <property type="project" value="GO_Central"/>
</dbReference>
<dbReference type="GO" id="GO:0051020">
    <property type="term" value="F:GTPase binding"/>
    <property type="evidence" value="ECO:0000353"/>
    <property type="project" value="UniProtKB"/>
</dbReference>
<dbReference type="GO" id="GO:0070417">
    <property type="term" value="P:cellular response to cold"/>
    <property type="evidence" value="ECO:0000315"/>
    <property type="project" value="UniProtKB"/>
</dbReference>
<dbReference type="GO" id="GO:0009737">
    <property type="term" value="P:response to abscisic acid"/>
    <property type="evidence" value="ECO:0000318"/>
    <property type="project" value="GO_Central"/>
</dbReference>
<dbReference type="InterPro" id="IPR025969">
    <property type="entry name" value="ABA_GPCR_dom"/>
</dbReference>
<dbReference type="InterPro" id="IPR022535">
    <property type="entry name" value="Golgi_pH-regulator_cons_dom"/>
</dbReference>
<dbReference type="InterPro" id="IPR015672">
    <property type="entry name" value="GPHR/GTG"/>
</dbReference>
<dbReference type="PANTHER" id="PTHR15948">
    <property type="entry name" value="G-PROTEIN COUPLED RECEPTOR 89-RELATED"/>
    <property type="match status" value="1"/>
</dbReference>
<dbReference type="PANTHER" id="PTHR15948:SF0">
    <property type="entry name" value="GOLGI PH REGULATOR A-RELATED"/>
    <property type="match status" value="1"/>
</dbReference>
<dbReference type="Pfam" id="PF12430">
    <property type="entry name" value="ABA_GPCR"/>
    <property type="match status" value="1"/>
</dbReference>
<dbReference type="Pfam" id="PF12537">
    <property type="entry name" value="GPHR_N"/>
    <property type="match status" value="1"/>
</dbReference>
<reference key="1">
    <citation type="journal article" date="2002" name="Nature">
        <title>Sequence and analysis of rice chromosome 4.</title>
        <authorList>
            <person name="Feng Q."/>
            <person name="Zhang Y."/>
            <person name="Hao P."/>
            <person name="Wang S."/>
            <person name="Fu G."/>
            <person name="Huang Y."/>
            <person name="Li Y."/>
            <person name="Zhu J."/>
            <person name="Liu Y."/>
            <person name="Hu X."/>
            <person name="Jia P."/>
            <person name="Zhang Y."/>
            <person name="Zhao Q."/>
            <person name="Ying K."/>
            <person name="Yu S."/>
            <person name="Tang Y."/>
            <person name="Weng Q."/>
            <person name="Zhang L."/>
            <person name="Lu Y."/>
            <person name="Mu J."/>
            <person name="Lu Y."/>
            <person name="Zhang L.S."/>
            <person name="Yu Z."/>
            <person name="Fan D."/>
            <person name="Liu X."/>
            <person name="Lu T."/>
            <person name="Li C."/>
            <person name="Wu Y."/>
            <person name="Sun T."/>
            <person name="Lei H."/>
            <person name="Li T."/>
            <person name="Hu H."/>
            <person name="Guan J."/>
            <person name="Wu M."/>
            <person name="Zhang R."/>
            <person name="Zhou B."/>
            <person name="Chen Z."/>
            <person name="Chen L."/>
            <person name="Jin Z."/>
            <person name="Wang R."/>
            <person name="Yin H."/>
            <person name="Cai Z."/>
            <person name="Ren S."/>
            <person name="Lv G."/>
            <person name="Gu W."/>
            <person name="Zhu G."/>
            <person name="Tu Y."/>
            <person name="Jia J."/>
            <person name="Zhang Y."/>
            <person name="Chen J."/>
            <person name="Kang H."/>
            <person name="Chen X."/>
            <person name="Shao C."/>
            <person name="Sun Y."/>
            <person name="Hu Q."/>
            <person name="Zhang X."/>
            <person name="Zhang W."/>
            <person name="Wang L."/>
            <person name="Ding C."/>
            <person name="Sheng H."/>
            <person name="Gu J."/>
            <person name="Chen S."/>
            <person name="Ni L."/>
            <person name="Zhu F."/>
            <person name="Chen W."/>
            <person name="Lan L."/>
            <person name="Lai Y."/>
            <person name="Cheng Z."/>
            <person name="Gu M."/>
            <person name="Jiang J."/>
            <person name="Li J."/>
            <person name="Hong G."/>
            <person name="Xue Y."/>
            <person name="Han B."/>
        </authorList>
    </citation>
    <scope>NUCLEOTIDE SEQUENCE [LARGE SCALE GENOMIC DNA]</scope>
    <source>
        <strain>cv. Nipponbare</strain>
    </source>
</reference>
<reference key="2">
    <citation type="journal article" date="2005" name="Nature">
        <title>The map-based sequence of the rice genome.</title>
        <authorList>
            <consortium name="International rice genome sequencing project (IRGSP)"/>
        </authorList>
    </citation>
    <scope>NUCLEOTIDE SEQUENCE [LARGE SCALE GENOMIC DNA]</scope>
    <source>
        <strain>cv. Nipponbare</strain>
    </source>
</reference>
<reference key="3">
    <citation type="journal article" date="2008" name="Nucleic Acids Res.">
        <title>The rice annotation project database (RAP-DB): 2008 update.</title>
        <authorList>
            <consortium name="The rice annotation project (RAP)"/>
        </authorList>
    </citation>
    <scope>GENOME REANNOTATION</scope>
    <source>
        <strain>cv. Nipponbare</strain>
    </source>
</reference>
<reference key="4">
    <citation type="journal article" date="2013" name="Rice">
        <title>Improvement of the Oryza sativa Nipponbare reference genome using next generation sequence and optical map data.</title>
        <authorList>
            <person name="Kawahara Y."/>
            <person name="de la Bastide M."/>
            <person name="Hamilton J.P."/>
            <person name="Kanamori H."/>
            <person name="McCombie W.R."/>
            <person name="Ouyang S."/>
            <person name="Schwartz D.C."/>
            <person name="Tanaka T."/>
            <person name="Wu J."/>
            <person name="Zhou S."/>
            <person name="Childs K.L."/>
            <person name="Davidson R.M."/>
            <person name="Lin H."/>
            <person name="Quesada-Ocampo L."/>
            <person name="Vaillancourt B."/>
            <person name="Sakai H."/>
            <person name="Lee S.S."/>
            <person name="Kim J."/>
            <person name="Numa H."/>
            <person name="Itoh T."/>
            <person name="Buell C.R."/>
            <person name="Matsumoto T."/>
        </authorList>
    </citation>
    <scope>GENOME REANNOTATION</scope>
    <source>
        <strain>cv. Nipponbare</strain>
    </source>
</reference>
<reference key="5">
    <citation type="journal article" date="2005" name="PLoS Biol.">
        <title>The genomes of Oryza sativa: a history of duplications.</title>
        <authorList>
            <person name="Yu J."/>
            <person name="Wang J."/>
            <person name="Lin W."/>
            <person name="Li S."/>
            <person name="Li H."/>
            <person name="Zhou J."/>
            <person name="Ni P."/>
            <person name="Dong W."/>
            <person name="Hu S."/>
            <person name="Zeng C."/>
            <person name="Zhang J."/>
            <person name="Zhang Y."/>
            <person name="Li R."/>
            <person name="Xu Z."/>
            <person name="Li S."/>
            <person name="Li X."/>
            <person name="Zheng H."/>
            <person name="Cong L."/>
            <person name="Lin L."/>
            <person name="Yin J."/>
            <person name="Geng J."/>
            <person name="Li G."/>
            <person name="Shi J."/>
            <person name="Liu J."/>
            <person name="Lv H."/>
            <person name="Li J."/>
            <person name="Wang J."/>
            <person name="Deng Y."/>
            <person name="Ran L."/>
            <person name="Shi X."/>
            <person name="Wang X."/>
            <person name="Wu Q."/>
            <person name="Li C."/>
            <person name="Ren X."/>
            <person name="Wang J."/>
            <person name="Wang X."/>
            <person name="Li D."/>
            <person name="Liu D."/>
            <person name="Zhang X."/>
            <person name="Ji Z."/>
            <person name="Zhao W."/>
            <person name="Sun Y."/>
            <person name="Zhang Z."/>
            <person name="Bao J."/>
            <person name="Han Y."/>
            <person name="Dong L."/>
            <person name="Ji J."/>
            <person name="Chen P."/>
            <person name="Wu S."/>
            <person name="Liu J."/>
            <person name="Xiao Y."/>
            <person name="Bu D."/>
            <person name="Tan J."/>
            <person name="Yang L."/>
            <person name="Ye C."/>
            <person name="Zhang J."/>
            <person name="Xu J."/>
            <person name="Zhou Y."/>
            <person name="Yu Y."/>
            <person name="Zhang B."/>
            <person name="Zhuang S."/>
            <person name="Wei H."/>
            <person name="Liu B."/>
            <person name="Lei M."/>
            <person name="Yu H."/>
            <person name="Li Y."/>
            <person name="Xu H."/>
            <person name="Wei S."/>
            <person name="He X."/>
            <person name="Fang L."/>
            <person name="Zhang Z."/>
            <person name="Zhang Y."/>
            <person name="Huang X."/>
            <person name="Su Z."/>
            <person name="Tong W."/>
            <person name="Li J."/>
            <person name="Tong Z."/>
            <person name="Li S."/>
            <person name="Ye J."/>
            <person name="Wang L."/>
            <person name="Fang L."/>
            <person name="Lei T."/>
            <person name="Chen C.-S."/>
            <person name="Chen H.-C."/>
            <person name="Xu Z."/>
            <person name="Li H."/>
            <person name="Huang H."/>
            <person name="Zhang F."/>
            <person name="Xu H."/>
            <person name="Li N."/>
            <person name="Zhao C."/>
            <person name="Li S."/>
            <person name="Dong L."/>
            <person name="Huang Y."/>
            <person name="Li L."/>
            <person name="Xi Y."/>
            <person name="Qi Q."/>
            <person name="Li W."/>
            <person name="Zhang B."/>
            <person name="Hu W."/>
            <person name="Zhang Y."/>
            <person name="Tian X."/>
            <person name="Jiao Y."/>
            <person name="Liang X."/>
            <person name="Jin J."/>
            <person name="Gao L."/>
            <person name="Zheng W."/>
            <person name="Hao B."/>
            <person name="Liu S.-M."/>
            <person name="Wang W."/>
            <person name="Yuan L."/>
            <person name="Cao M."/>
            <person name="McDermott J."/>
            <person name="Samudrala R."/>
            <person name="Wang J."/>
            <person name="Wong G.K.-S."/>
            <person name="Yang H."/>
        </authorList>
    </citation>
    <scope>NUCLEOTIDE SEQUENCE [LARGE SCALE GENOMIC DNA]</scope>
    <source>
        <strain>cv. Nipponbare</strain>
    </source>
</reference>
<reference key="6">
    <citation type="submission" date="2008-11" db="EMBL/GenBank/DDBJ databases">
        <title>Oryza sativa full length cDNA.</title>
        <authorList>
            <consortium name="The rice full-length cDNA consortium"/>
        </authorList>
    </citation>
    <scope>NUCLEOTIDE SEQUENCE [LARGE SCALE MRNA]</scope>
    <source>
        <strain>cv. Nipponbare</strain>
    </source>
</reference>
<reference key="7">
    <citation type="journal article" date="2015" name="Cell">
        <title>COLD1 confers chilling tolerance in rice.</title>
        <authorList>
            <person name="Ma Y."/>
            <person name="Dai X."/>
            <person name="Xu Y."/>
            <person name="Luo W."/>
            <person name="Zheng X."/>
            <person name="Zeng D."/>
            <person name="Pan Y."/>
            <person name="Lin X."/>
            <person name="Liu H."/>
            <person name="Zhang D."/>
            <person name="Xiao J."/>
            <person name="Guo X."/>
            <person name="Xu S."/>
            <person name="Niu Y."/>
            <person name="Jin J."/>
            <person name="Zhang H."/>
            <person name="Xu X."/>
            <person name="Li L."/>
            <person name="Wang W."/>
            <person name="Qian Q."/>
            <person name="Ge S."/>
            <person name="Chong K."/>
        </authorList>
    </citation>
    <scope>FUNCTION</scope>
    <scope>INTERACTION WITH GPA1/RGA1</scope>
    <scope>SUBCELLULAR LOCATION</scope>
    <scope>DISRUPTION PHENOTYPE</scope>
    <scope>CLEAVAGE OF INITIATOR METHIONINE</scope>
    <scope>MYRISTOYLATION AT GLY-2</scope>
    <scope>MUTAGENESIS OF GLY-2</scope>
    <source>
        <strain>cv. Dongjin</strain>
        <strain>cv. Nipponbare</strain>
    </source>
</reference>